<dbReference type="EMBL" id="CU179680">
    <property type="protein sequence ID" value="CAL59240.1"/>
    <property type="molecule type" value="Genomic_DNA"/>
</dbReference>
<dbReference type="RefSeq" id="WP_004023955.1">
    <property type="nucleotide sequence ID" value="NC_009497.1"/>
</dbReference>
<dbReference type="SMR" id="A5IYY1"/>
<dbReference type="STRING" id="347257.MAG5410"/>
<dbReference type="GeneID" id="93358285"/>
<dbReference type="KEGG" id="maa:MAG5410"/>
<dbReference type="HOGENOM" id="CLU_083987_3_1_14"/>
<dbReference type="Proteomes" id="UP000007065">
    <property type="component" value="Chromosome"/>
</dbReference>
<dbReference type="GO" id="GO:0022625">
    <property type="term" value="C:cytosolic large ribosomal subunit"/>
    <property type="evidence" value="ECO:0007669"/>
    <property type="project" value="TreeGrafter"/>
</dbReference>
<dbReference type="GO" id="GO:0019843">
    <property type="term" value="F:rRNA binding"/>
    <property type="evidence" value="ECO:0007669"/>
    <property type="project" value="UniProtKB-UniRule"/>
</dbReference>
<dbReference type="GO" id="GO:0003735">
    <property type="term" value="F:structural constituent of ribosome"/>
    <property type="evidence" value="ECO:0007669"/>
    <property type="project" value="InterPro"/>
</dbReference>
<dbReference type="GO" id="GO:0006412">
    <property type="term" value="P:translation"/>
    <property type="evidence" value="ECO:0007669"/>
    <property type="project" value="UniProtKB-UniRule"/>
</dbReference>
<dbReference type="CDD" id="cd00336">
    <property type="entry name" value="Ribosomal_L22"/>
    <property type="match status" value="1"/>
</dbReference>
<dbReference type="Gene3D" id="3.90.470.10">
    <property type="entry name" value="Ribosomal protein L22/L17"/>
    <property type="match status" value="1"/>
</dbReference>
<dbReference type="HAMAP" id="MF_01331_B">
    <property type="entry name" value="Ribosomal_uL22_B"/>
    <property type="match status" value="1"/>
</dbReference>
<dbReference type="InterPro" id="IPR001063">
    <property type="entry name" value="Ribosomal_uL22"/>
</dbReference>
<dbReference type="InterPro" id="IPR005727">
    <property type="entry name" value="Ribosomal_uL22_bac/chlpt-type"/>
</dbReference>
<dbReference type="InterPro" id="IPR047867">
    <property type="entry name" value="Ribosomal_uL22_bac/org-type"/>
</dbReference>
<dbReference type="InterPro" id="IPR018260">
    <property type="entry name" value="Ribosomal_uL22_CS"/>
</dbReference>
<dbReference type="InterPro" id="IPR036394">
    <property type="entry name" value="Ribosomal_uL22_sf"/>
</dbReference>
<dbReference type="NCBIfam" id="TIGR01044">
    <property type="entry name" value="rplV_bact"/>
    <property type="match status" value="1"/>
</dbReference>
<dbReference type="PANTHER" id="PTHR13501">
    <property type="entry name" value="CHLOROPLAST 50S RIBOSOMAL PROTEIN L22-RELATED"/>
    <property type="match status" value="1"/>
</dbReference>
<dbReference type="PANTHER" id="PTHR13501:SF8">
    <property type="entry name" value="LARGE RIBOSOMAL SUBUNIT PROTEIN UL22M"/>
    <property type="match status" value="1"/>
</dbReference>
<dbReference type="Pfam" id="PF00237">
    <property type="entry name" value="Ribosomal_L22"/>
    <property type="match status" value="1"/>
</dbReference>
<dbReference type="SUPFAM" id="SSF54843">
    <property type="entry name" value="Ribosomal protein L22"/>
    <property type="match status" value="1"/>
</dbReference>
<dbReference type="PROSITE" id="PS00464">
    <property type="entry name" value="RIBOSOMAL_L22"/>
    <property type="match status" value="1"/>
</dbReference>
<reference key="1">
    <citation type="journal article" date="2007" name="PLoS Genet.">
        <title>Being pathogenic, plastic, and sexual while living with a nearly minimal bacterial genome.</title>
        <authorList>
            <person name="Sirand-Pugnet P."/>
            <person name="Lartigue C."/>
            <person name="Marenda M."/>
            <person name="Jacob D."/>
            <person name="Barre A."/>
            <person name="Barbe V."/>
            <person name="Schenowitz C."/>
            <person name="Mangenot S."/>
            <person name="Couloux A."/>
            <person name="Segurens B."/>
            <person name="de Daruvar A."/>
            <person name="Blanchard A."/>
            <person name="Citti C."/>
        </authorList>
    </citation>
    <scope>NUCLEOTIDE SEQUENCE [LARGE SCALE GENOMIC DNA]</scope>
    <source>
        <strain>NCTC 10123 / CIP 59.7 / PG2</strain>
    </source>
</reference>
<gene>
    <name evidence="1" type="primary">rplV</name>
    <name type="ordered locus">MAG5410</name>
</gene>
<comment type="function">
    <text evidence="1">This protein binds specifically to 23S rRNA; its binding is stimulated by other ribosomal proteins, e.g. L4, L17, and L20. It is important during the early stages of 50S assembly. It makes multiple contacts with different domains of the 23S rRNA in the assembled 50S subunit and ribosome (By similarity).</text>
</comment>
<comment type="function">
    <text evidence="1">The globular domain of the protein is located near the polypeptide exit tunnel on the outside of the subunit, while an extended beta-hairpin is found that lines the wall of the exit tunnel in the center of the 70S ribosome.</text>
</comment>
<comment type="subunit">
    <text evidence="1">Part of the 50S ribosomal subunit.</text>
</comment>
<comment type="similarity">
    <text evidence="1">Belongs to the universal ribosomal protein uL22 family.</text>
</comment>
<evidence type="ECO:0000255" key="1">
    <source>
        <dbReference type="HAMAP-Rule" id="MF_01331"/>
    </source>
</evidence>
<evidence type="ECO:0000305" key="2"/>
<accession>A5IYY1</accession>
<sequence length="114" mass="12724">MNNQSAKAVVKIQRISPRKARLVADLFRGKDVKVALGILNNTNKKASQLFIKLLNSAIANATNNHGMDASKLFVKEVLVNEGPTLKRYQPRSQGRAYSIFKRTSNLSITLEERV</sequence>
<proteinExistence type="inferred from homology"/>
<name>RL22_MYCAP</name>
<feature type="chain" id="PRO_0000354495" description="Large ribosomal subunit protein uL22">
    <location>
        <begin position="1"/>
        <end position="114"/>
    </location>
</feature>
<organism>
    <name type="scientific">Mycoplasmopsis agalactiae (strain NCTC 10123 / CIP 59.7 / PG2)</name>
    <name type="common">Mycoplasma agalactiae</name>
    <dbReference type="NCBI Taxonomy" id="347257"/>
    <lineage>
        <taxon>Bacteria</taxon>
        <taxon>Bacillati</taxon>
        <taxon>Mycoplasmatota</taxon>
        <taxon>Mycoplasmoidales</taxon>
        <taxon>Metamycoplasmataceae</taxon>
        <taxon>Mycoplasmopsis</taxon>
    </lineage>
</organism>
<protein>
    <recommendedName>
        <fullName evidence="1">Large ribosomal subunit protein uL22</fullName>
    </recommendedName>
    <alternativeName>
        <fullName evidence="2">50S ribosomal protein L22</fullName>
    </alternativeName>
</protein>
<keyword id="KW-1185">Reference proteome</keyword>
<keyword id="KW-0687">Ribonucleoprotein</keyword>
<keyword id="KW-0689">Ribosomal protein</keyword>
<keyword id="KW-0694">RNA-binding</keyword>
<keyword id="KW-0699">rRNA-binding</keyword>